<keyword id="KW-0032">Aminotransferase</keyword>
<keyword id="KW-0056">Arginine metabolism</keyword>
<keyword id="KW-0663">Pyridoxal phosphate</keyword>
<keyword id="KW-0808">Transferase</keyword>
<reference key="1">
    <citation type="journal article" date="2009" name="J. Bacteriol.">
        <title>Genomic sequencing reveals regulatory mutations and recombinational events in the widely used MC4100 lineage of Escherichia coli K-12.</title>
        <authorList>
            <person name="Ferenci T."/>
            <person name="Zhou Z."/>
            <person name="Betteridge T."/>
            <person name="Ren Y."/>
            <person name="Liu Y."/>
            <person name="Feng L."/>
            <person name="Reeves P.R."/>
            <person name="Wang L."/>
        </authorList>
    </citation>
    <scope>NUCLEOTIDE SEQUENCE [LARGE SCALE GENOMIC DNA]</scope>
    <source>
        <strain>K12 / MC4100 / BW2952</strain>
    </source>
</reference>
<organism>
    <name type="scientific">Escherichia coli (strain K12 / MC4100 / BW2952)</name>
    <dbReference type="NCBI Taxonomy" id="595496"/>
    <lineage>
        <taxon>Bacteria</taxon>
        <taxon>Pseudomonadati</taxon>
        <taxon>Pseudomonadota</taxon>
        <taxon>Gammaproteobacteria</taxon>
        <taxon>Enterobacterales</taxon>
        <taxon>Enterobacteriaceae</taxon>
        <taxon>Escherichia</taxon>
    </lineage>
</organism>
<name>ASTC_ECOBW</name>
<proteinExistence type="inferred from homology"/>
<accession>C4ZZA4</accession>
<comment type="function">
    <text evidence="1">Catalyzes the transamination of N(2)-succinylornithine and alpha-ketoglutarate into N(2)-succinylglutamate semialdehyde and glutamate. Can also act as an acetylornithine aminotransferase.</text>
</comment>
<comment type="catalytic activity">
    <reaction evidence="1">
        <text>N(2)-succinyl-L-ornithine + 2-oxoglutarate = N-succinyl-L-glutamate 5-semialdehyde + L-glutamate</text>
        <dbReference type="Rhea" id="RHEA:16953"/>
        <dbReference type="ChEBI" id="CHEBI:16810"/>
        <dbReference type="ChEBI" id="CHEBI:29985"/>
        <dbReference type="ChEBI" id="CHEBI:58514"/>
        <dbReference type="ChEBI" id="CHEBI:58520"/>
        <dbReference type="EC" id="2.6.1.81"/>
    </reaction>
</comment>
<comment type="cofactor">
    <cofactor evidence="1">
        <name>pyridoxal 5'-phosphate</name>
        <dbReference type="ChEBI" id="CHEBI:597326"/>
    </cofactor>
</comment>
<comment type="pathway">
    <text evidence="1">Amino-acid degradation; L-arginine degradation via AST pathway; L-glutamate and succinate from L-arginine: step 3/5.</text>
</comment>
<comment type="similarity">
    <text evidence="1">Belongs to the class-III pyridoxal-phosphate-dependent aminotransferase family. AstC subfamily.</text>
</comment>
<feature type="chain" id="PRO_1000213741" description="Succinylornithine transaminase">
    <location>
        <begin position="1"/>
        <end position="406"/>
    </location>
</feature>
<feature type="modified residue" description="N6-(pyridoxal phosphate)lysine" evidence="1">
    <location>
        <position position="252"/>
    </location>
</feature>
<protein>
    <recommendedName>
        <fullName evidence="1">Succinylornithine transaminase</fullName>
        <ecNumber evidence="1">2.6.1.81</ecNumber>
    </recommendedName>
    <alternativeName>
        <fullName evidence="1">Succinylornithine aminotransferase</fullName>
    </alternativeName>
</protein>
<sequence length="406" mass="43665">MSQPITRENFDEWMIPVYAPAPFIPVRGEGSRLWDQQGKEYIDFAGGIAVNALGHAHPELREALNEQASKFWHTGNGYTNEPVLRLAKKLIDATFADRVFFCNSGAEANEAALKLARKFAHDRYGSHKSGIVAFKNAFHGRTLFTVSAGGQPAYSQDFAPLPADIRHAAYNDINSASALIDDSTCAVIVEPIQGEGGVVPASNAFLQGLRELCNRHNALLIFDEVQTGVGRTGELYAYMHYGVTPDLLTTAKALGGGFPVGALLATEECARVMTVGTHGTTYGGNPLASAVAGKVLELINTPEMLNGVKQRHDWFVERLNTINHRYGLFSEVRGLGLLIGCVLNADYAGQAKQISQEAAKAGVMVLIAGGNVVRFAPALNVSEEEVTTGLDRFAAACEHFVSRGSS</sequence>
<dbReference type="EC" id="2.6.1.81" evidence="1"/>
<dbReference type="EMBL" id="CP001396">
    <property type="protein sequence ID" value="ACR65594.1"/>
    <property type="molecule type" value="Genomic_DNA"/>
</dbReference>
<dbReference type="RefSeq" id="WP_000081983.1">
    <property type="nucleotide sequence ID" value="NC_012759.1"/>
</dbReference>
<dbReference type="SMR" id="C4ZZA4"/>
<dbReference type="GeneID" id="75203054"/>
<dbReference type="KEGG" id="ebw:BWG_1561"/>
<dbReference type="HOGENOM" id="CLU_016922_10_1_6"/>
<dbReference type="UniPathway" id="UPA00185">
    <property type="reaction ID" value="UER00281"/>
</dbReference>
<dbReference type="GO" id="GO:0042802">
    <property type="term" value="F:identical protein binding"/>
    <property type="evidence" value="ECO:0007669"/>
    <property type="project" value="TreeGrafter"/>
</dbReference>
<dbReference type="GO" id="GO:0030170">
    <property type="term" value="F:pyridoxal phosphate binding"/>
    <property type="evidence" value="ECO:0007669"/>
    <property type="project" value="UniProtKB-UniRule"/>
</dbReference>
<dbReference type="GO" id="GO:0043825">
    <property type="term" value="F:succinylornithine transaminase activity"/>
    <property type="evidence" value="ECO:0007669"/>
    <property type="project" value="UniProtKB-EC"/>
</dbReference>
<dbReference type="GO" id="GO:1901607">
    <property type="term" value="P:alpha-amino acid biosynthetic process"/>
    <property type="evidence" value="ECO:0007669"/>
    <property type="project" value="UniProtKB-ARBA"/>
</dbReference>
<dbReference type="GO" id="GO:0019544">
    <property type="term" value="P:arginine catabolic process to glutamate"/>
    <property type="evidence" value="ECO:0007669"/>
    <property type="project" value="UniProtKB-UniRule"/>
</dbReference>
<dbReference type="GO" id="GO:0019545">
    <property type="term" value="P:arginine catabolic process to succinate"/>
    <property type="evidence" value="ECO:0007669"/>
    <property type="project" value="UniProtKB-UniRule"/>
</dbReference>
<dbReference type="GO" id="GO:0006593">
    <property type="term" value="P:ornithine catabolic process"/>
    <property type="evidence" value="ECO:0007669"/>
    <property type="project" value="InterPro"/>
</dbReference>
<dbReference type="CDD" id="cd00610">
    <property type="entry name" value="OAT_like"/>
    <property type="match status" value="1"/>
</dbReference>
<dbReference type="FunFam" id="3.40.640.10:FF:000004">
    <property type="entry name" value="Acetylornithine aminotransferase"/>
    <property type="match status" value="1"/>
</dbReference>
<dbReference type="FunFam" id="3.90.1150.10:FF:000009">
    <property type="entry name" value="Succinylornithine transaminase"/>
    <property type="match status" value="1"/>
</dbReference>
<dbReference type="Gene3D" id="3.90.1150.10">
    <property type="entry name" value="Aspartate Aminotransferase, domain 1"/>
    <property type="match status" value="1"/>
</dbReference>
<dbReference type="Gene3D" id="3.40.640.10">
    <property type="entry name" value="Type I PLP-dependent aspartate aminotransferase-like (Major domain)"/>
    <property type="match status" value="1"/>
</dbReference>
<dbReference type="HAMAP" id="MF_01107">
    <property type="entry name" value="ArgD_aminotrans_3"/>
    <property type="match status" value="1"/>
</dbReference>
<dbReference type="HAMAP" id="MF_01173">
    <property type="entry name" value="AstC_aminotrans_3"/>
    <property type="match status" value="1"/>
</dbReference>
<dbReference type="InterPro" id="IPR017652">
    <property type="entry name" value="Ac/SucOrn_transaminase_bac"/>
</dbReference>
<dbReference type="InterPro" id="IPR004636">
    <property type="entry name" value="AcOrn/SuccOrn_fam"/>
</dbReference>
<dbReference type="InterPro" id="IPR005814">
    <property type="entry name" value="Aminotrans_3"/>
</dbReference>
<dbReference type="InterPro" id="IPR049704">
    <property type="entry name" value="Aminotrans_3_PPA_site"/>
</dbReference>
<dbReference type="InterPro" id="IPR050103">
    <property type="entry name" value="Class-III_PLP-dep_AT"/>
</dbReference>
<dbReference type="InterPro" id="IPR015424">
    <property type="entry name" value="PyrdxlP-dep_Trfase"/>
</dbReference>
<dbReference type="InterPro" id="IPR015421">
    <property type="entry name" value="PyrdxlP-dep_Trfase_major"/>
</dbReference>
<dbReference type="InterPro" id="IPR015422">
    <property type="entry name" value="PyrdxlP-dep_Trfase_small"/>
</dbReference>
<dbReference type="InterPro" id="IPR026330">
    <property type="entry name" value="SOAT"/>
</dbReference>
<dbReference type="NCBIfam" id="TIGR03246">
    <property type="entry name" value="arg_catab_astC"/>
    <property type="match status" value="1"/>
</dbReference>
<dbReference type="NCBIfam" id="TIGR00707">
    <property type="entry name" value="argD"/>
    <property type="match status" value="1"/>
</dbReference>
<dbReference type="NCBIfam" id="NF002325">
    <property type="entry name" value="PRK01278.1"/>
    <property type="match status" value="1"/>
</dbReference>
<dbReference type="NCBIfam" id="NF003468">
    <property type="entry name" value="PRK05093.1"/>
    <property type="match status" value="1"/>
</dbReference>
<dbReference type="NCBIfam" id="NF009047">
    <property type="entry name" value="PRK12381.1"/>
    <property type="match status" value="1"/>
</dbReference>
<dbReference type="PANTHER" id="PTHR11986">
    <property type="entry name" value="AMINOTRANSFERASE CLASS III"/>
    <property type="match status" value="1"/>
</dbReference>
<dbReference type="PANTHER" id="PTHR11986:SF113">
    <property type="entry name" value="SUCCINYLORNITHINE TRANSAMINASE"/>
    <property type="match status" value="1"/>
</dbReference>
<dbReference type="Pfam" id="PF00202">
    <property type="entry name" value="Aminotran_3"/>
    <property type="match status" value="1"/>
</dbReference>
<dbReference type="PIRSF" id="PIRSF000521">
    <property type="entry name" value="Transaminase_4ab_Lys_Orn"/>
    <property type="match status" value="1"/>
</dbReference>
<dbReference type="SUPFAM" id="SSF53383">
    <property type="entry name" value="PLP-dependent transferases"/>
    <property type="match status" value="1"/>
</dbReference>
<dbReference type="PROSITE" id="PS00600">
    <property type="entry name" value="AA_TRANSFER_CLASS_3"/>
    <property type="match status" value="1"/>
</dbReference>
<gene>
    <name evidence="1" type="primary">astC</name>
    <name evidence="1" type="synonym">argM</name>
    <name type="ordered locus">BWG_1561</name>
</gene>
<evidence type="ECO:0000255" key="1">
    <source>
        <dbReference type="HAMAP-Rule" id="MF_01173"/>
    </source>
</evidence>